<dbReference type="EC" id="6.3.4.5" evidence="1"/>
<dbReference type="EMBL" id="CU928145">
    <property type="protein sequence ID" value="CAU99803.1"/>
    <property type="molecule type" value="Genomic_DNA"/>
</dbReference>
<dbReference type="RefSeq" id="WP_000207685.1">
    <property type="nucleotide sequence ID" value="NC_011748.1"/>
</dbReference>
<dbReference type="SMR" id="B7LHN6"/>
<dbReference type="GeneID" id="75206028"/>
<dbReference type="KEGG" id="eck:EC55989_3591"/>
<dbReference type="HOGENOM" id="CLU_032784_4_1_6"/>
<dbReference type="UniPathway" id="UPA00068">
    <property type="reaction ID" value="UER00113"/>
</dbReference>
<dbReference type="Proteomes" id="UP000000746">
    <property type="component" value="Chromosome"/>
</dbReference>
<dbReference type="GO" id="GO:0005737">
    <property type="term" value="C:cytoplasm"/>
    <property type="evidence" value="ECO:0007669"/>
    <property type="project" value="UniProtKB-SubCell"/>
</dbReference>
<dbReference type="GO" id="GO:0004055">
    <property type="term" value="F:argininosuccinate synthase activity"/>
    <property type="evidence" value="ECO:0007669"/>
    <property type="project" value="UniProtKB-UniRule"/>
</dbReference>
<dbReference type="GO" id="GO:0005524">
    <property type="term" value="F:ATP binding"/>
    <property type="evidence" value="ECO:0007669"/>
    <property type="project" value="UniProtKB-UniRule"/>
</dbReference>
<dbReference type="GO" id="GO:0042803">
    <property type="term" value="F:protein homodimerization activity"/>
    <property type="evidence" value="ECO:0007669"/>
    <property type="project" value="InterPro"/>
</dbReference>
<dbReference type="GO" id="GO:0000053">
    <property type="term" value="P:argininosuccinate metabolic process"/>
    <property type="evidence" value="ECO:0007669"/>
    <property type="project" value="TreeGrafter"/>
</dbReference>
<dbReference type="GO" id="GO:0006526">
    <property type="term" value="P:L-arginine biosynthetic process"/>
    <property type="evidence" value="ECO:0007669"/>
    <property type="project" value="UniProtKB-UniRule"/>
</dbReference>
<dbReference type="GO" id="GO:0000050">
    <property type="term" value="P:urea cycle"/>
    <property type="evidence" value="ECO:0007669"/>
    <property type="project" value="TreeGrafter"/>
</dbReference>
<dbReference type="CDD" id="cd01999">
    <property type="entry name" value="ASS"/>
    <property type="match status" value="1"/>
</dbReference>
<dbReference type="FunFam" id="1.10.287.400:FF:000001">
    <property type="entry name" value="Argininosuccinate synthase"/>
    <property type="match status" value="1"/>
</dbReference>
<dbReference type="Gene3D" id="1.10.287.400">
    <property type="match status" value="1"/>
</dbReference>
<dbReference type="Gene3D" id="3.90.1260.10">
    <property type="entry name" value="Argininosuccinate synthetase, chain A, domain 2"/>
    <property type="match status" value="1"/>
</dbReference>
<dbReference type="Gene3D" id="3.40.50.620">
    <property type="entry name" value="HUPs"/>
    <property type="match status" value="1"/>
</dbReference>
<dbReference type="HAMAP" id="MF_00581">
    <property type="entry name" value="Arg_succ_synth_type2"/>
    <property type="match status" value="1"/>
</dbReference>
<dbReference type="InterPro" id="IPR023437">
    <property type="entry name" value="Arg_succ_synth_type2_subfam"/>
</dbReference>
<dbReference type="InterPro" id="IPR048268">
    <property type="entry name" value="Arginosuc_syn_C"/>
</dbReference>
<dbReference type="InterPro" id="IPR048267">
    <property type="entry name" value="Arginosuc_syn_N"/>
</dbReference>
<dbReference type="InterPro" id="IPR001518">
    <property type="entry name" value="Arginosuc_synth"/>
</dbReference>
<dbReference type="InterPro" id="IPR018223">
    <property type="entry name" value="Arginosuc_synth_CS"/>
</dbReference>
<dbReference type="InterPro" id="IPR023434">
    <property type="entry name" value="Arginosuc_synth_type_1_subfam"/>
</dbReference>
<dbReference type="InterPro" id="IPR024074">
    <property type="entry name" value="AS_cat/multimer_dom_body"/>
</dbReference>
<dbReference type="InterPro" id="IPR024073">
    <property type="entry name" value="AS_multimer_C_tail"/>
</dbReference>
<dbReference type="InterPro" id="IPR014729">
    <property type="entry name" value="Rossmann-like_a/b/a_fold"/>
</dbReference>
<dbReference type="NCBIfam" id="TIGR00032">
    <property type="entry name" value="argG"/>
    <property type="match status" value="1"/>
</dbReference>
<dbReference type="NCBIfam" id="NF003779">
    <property type="entry name" value="PRK05370.1"/>
    <property type="match status" value="1"/>
</dbReference>
<dbReference type="PANTHER" id="PTHR11587">
    <property type="entry name" value="ARGININOSUCCINATE SYNTHASE"/>
    <property type="match status" value="1"/>
</dbReference>
<dbReference type="PANTHER" id="PTHR11587:SF2">
    <property type="entry name" value="ARGININOSUCCINATE SYNTHASE"/>
    <property type="match status" value="1"/>
</dbReference>
<dbReference type="Pfam" id="PF20979">
    <property type="entry name" value="Arginosuc_syn_C"/>
    <property type="match status" value="1"/>
</dbReference>
<dbReference type="Pfam" id="PF00764">
    <property type="entry name" value="Arginosuc_synth"/>
    <property type="match status" value="1"/>
</dbReference>
<dbReference type="SUPFAM" id="SSF52402">
    <property type="entry name" value="Adenine nucleotide alpha hydrolases-like"/>
    <property type="match status" value="1"/>
</dbReference>
<dbReference type="SUPFAM" id="SSF69864">
    <property type="entry name" value="Argininosuccinate synthetase, C-terminal domain"/>
    <property type="match status" value="1"/>
</dbReference>
<dbReference type="PROSITE" id="PS00564">
    <property type="entry name" value="ARGININOSUCCIN_SYN_1"/>
    <property type="match status" value="1"/>
</dbReference>
<dbReference type="PROSITE" id="PS00565">
    <property type="entry name" value="ARGININOSUCCIN_SYN_2"/>
    <property type="match status" value="1"/>
</dbReference>
<protein>
    <recommendedName>
        <fullName evidence="1">Argininosuccinate synthase</fullName>
        <ecNumber evidence="1">6.3.4.5</ecNumber>
    </recommendedName>
    <alternativeName>
        <fullName evidence="1">Citrulline--aspartate ligase</fullName>
    </alternativeName>
</protein>
<keyword id="KW-0028">Amino-acid biosynthesis</keyword>
<keyword id="KW-0055">Arginine biosynthesis</keyword>
<keyword id="KW-0067">ATP-binding</keyword>
<keyword id="KW-0963">Cytoplasm</keyword>
<keyword id="KW-0436">Ligase</keyword>
<keyword id="KW-0547">Nucleotide-binding</keyword>
<keyword id="KW-1185">Reference proteome</keyword>
<name>ASSY_ECO55</name>
<evidence type="ECO:0000255" key="1">
    <source>
        <dbReference type="HAMAP-Rule" id="MF_00581"/>
    </source>
</evidence>
<feature type="chain" id="PRO_1000146930" description="Argininosuccinate synthase">
    <location>
        <begin position="1"/>
        <end position="447"/>
    </location>
</feature>
<feature type="binding site" evidence="1">
    <location>
        <begin position="17"/>
        <end position="25"/>
    </location>
    <ligand>
        <name>ATP</name>
        <dbReference type="ChEBI" id="CHEBI:30616"/>
    </ligand>
</feature>
<feature type="binding site" evidence="1">
    <location>
        <position position="43"/>
    </location>
    <ligand>
        <name>ATP</name>
        <dbReference type="ChEBI" id="CHEBI:30616"/>
    </ligand>
</feature>
<feature type="binding site" evidence="1">
    <location>
        <position position="99"/>
    </location>
    <ligand>
        <name>L-citrulline</name>
        <dbReference type="ChEBI" id="CHEBI:57743"/>
    </ligand>
</feature>
<feature type="binding site" evidence="1">
    <location>
        <position position="129"/>
    </location>
    <ligand>
        <name>ATP</name>
        <dbReference type="ChEBI" id="CHEBI:30616"/>
    </ligand>
</feature>
<feature type="binding site" evidence="1">
    <location>
        <position position="131"/>
    </location>
    <ligand>
        <name>ATP</name>
        <dbReference type="ChEBI" id="CHEBI:30616"/>
    </ligand>
</feature>
<feature type="binding site" evidence="1">
    <location>
        <position position="131"/>
    </location>
    <ligand>
        <name>L-aspartate</name>
        <dbReference type="ChEBI" id="CHEBI:29991"/>
    </ligand>
</feature>
<feature type="binding site" evidence="1">
    <location>
        <position position="135"/>
    </location>
    <ligand>
        <name>L-aspartate</name>
        <dbReference type="ChEBI" id="CHEBI:29991"/>
    </ligand>
</feature>
<feature type="binding site" evidence="1">
    <location>
        <position position="135"/>
    </location>
    <ligand>
        <name>L-citrulline</name>
        <dbReference type="ChEBI" id="CHEBI:57743"/>
    </ligand>
</feature>
<feature type="binding site" evidence="1">
    <location>
        <position position="136"/>
    </location>
    <ligand>
        <name>ATP</name>
        <dbReference type="ChEBI" id="CHEBI:30616"/>
    </ligand>
</feature>
<feature type="binding site" evidence="1">
    <location>
        <position position="136"/>
    </location>
    <ligand>
        <name>L-aspartate</name>
        <dbReference type="ChEBI" id="CHEBI:29991"/>
    </ligand>
</feature>
<feature type="binding site" evidence="1">
    <location>
        <position position="139"/>
    </location>
    <ligand>
        <name>L-citrulline</name>
        <dbReference type="ChEBI" id="CHEBI:57743"/>
    </ligand>
</feature>
<feature type="binding site" evidence="1">
    <location>
        <position position="192"/>
    </location>
    <ligand>
        <name>L-citrulline</name>
        <dbReference type="ChEBI" id="CHEBI:57743"/>
    </ligand>
</feature>
<feature type="binding site" evidence="1">
    <location>
        <position position="194"/>
    </location>
    <ligand>
        <name>ATP</name>
        <dbReference type="ChEBI" id="CHEBI:30616"/>
    </ligand>
</feature>
<feature type="binding site" evidence="1">
    <location>
        <position position="201"/>
    </location>
    <ligand>
        <name>L-citrulline</name>
        <dbReference type="ChEBI" id="CHEBI:57743"/>
    </ligand>
</feature>
<feature type="binding site" evidence="1">
    <location>
        <position position="203"/>
    </location>
    <ligand>
        <name>L-citrulline</name>
        <dbReference type="ChEBI" id="CHEBI:57743"/>
    </ligand>
</feature>
<feature type="binding site" evidence="1">
    <location>
        <position position="280"/>
    </location>
    <ligand>
        <name>L-citrulline</name>
        <dbReference type="ChEBI" id="CHEBI:57743"/>
    </ligand>
</feature>
<proteinExistence type="inferred from homology"/>
<accession>B7LHN6</accession>
<gene>
    <name evidence="1" type="primary">argG</name>
    <name type="ordered locus">EC55989_3591</name>
</gene>
<reference key="1">
    <citation type="journal article" date="2009" name="PLoS Genet.">
        <title>Organised genome dynamics in the Escherichia coli species results in highly diverse adaptive paths.</title>
        <authorList>
            <person name="Touchon M."/>
            <person name="Hoede C."/>
            <person name="Tenaillon O."/>
            <person name="Barbe V."/>
            <person name="Baeriswyl S."/>
            <person name="Bidet P."/>
            <person name="Bingen E."/>
            <person name="Bonacorsi S."/>
            <person name="Bouchier C."/>
            <person name="Bouvet O."/>
            <person name="Calteau A."/>
            <person name="Chiapello H."/>
            <person name="Clermont O."/>
            <person name="Cruveiller S."/>
            <person name="Danchin A."/>
            <person name="Diard M."/>
            <person name="Dossat C."/>
            <person name="Karoui M.E."/>
            <person name="Frapy E."/>
            <person name="Garry L."/>
            <person name="Ghigo J.M."/>
            <person name="Gilles A.M."/>
            <person name="Johnson J."/>
            <person name="Le Bouguenec C."/>
            <person name="Lescat M."/>
            <person name="Mangenot S."/>
            <person name="Martinez-Jehanne V."/>
            <person name="Matic I."/>
            <person name="Nassif X."/>
            <person name="Oztas S."/>
            <person name="Petit M.A."/>
            <person name="Pichon C."/>
            <person name="Rouy Z."/>
            <person name="Ruf C.S."/>
            <person name="Schneider D."/>
            <person name="Tourret J."/>
            <person name="Vacherie B."/>
            <person name="Vallenet D."/>
            <person name="Medigue C."/>
            <person name="Rocha E.P.C."/>
            <person name="Denamur E."/>
        </authorList>
    </citation>
    <scope>NUCLEOTIDE SEQUENCE [LARGE SCALE GENOMIC DNA]</scope>
    <source>
        <strain>55989 / EAEC</strain>
    </source>
</reference>
<sequence length="447" mass="49946">MTTILKHLPVGQRIGIAFSGGLDTSAALLWMRQKGAVPYAYTANLGQPDEEDYDAIPRRAMEYGAENARLIDCRKQLVAEGIAAIQCGAFHNTTGGLTYFNTTPLGRAVTGTMLVAAMKEDGVNIWGDGSTYKGNDIERFYRYGLLTNAELQIYKPWLDTDFIDELGGRHEMSEFMIACGFDYKMSVEKAYSTDSNMLGATHEAKDLEYLNSSVKIVNPIMGVKFWDESVKIPAEEVTVRFEQGHPVALNGKTFSDDVEMMLEANRIGGRHGLGMSDQIENRIIEAKSRGIYEAPGMALLHIAYERLLTGIHNEDTIEQYHAHGRQLGRLLYQGRWFDSQALMLRDSLQRWVASQITGEVTLELRRGNDYSILNTVSENLTYKPERLTMEKGDSVFSPDDRIGQLTMRNLDITDTREKLFGYAKTGLLSSSATSGVPQVENMENKGQ</sequence>
<organism>
    <name type="scientific">Escherichia coli (strain 55989 / EAEC)</name>
    <dbReference type="NCBI Taxonomy" id="585055"/>
    <lineage>
        <taxon>Bacteria</taxon>
        <taxon>Pseudomonadati</taxon>
        <taxon>Pseudomonadota</taxon>
        <taxon>Gammaproteobacteria</taxon>
        <taxon>Enterobacterales</taxon>
        <taxon>Enterobacteriaceae</taxon>
        <taxon>Escherichia</taxon>
    </lineage>
</organism>
<comment type="catalytic activity">
    <reaction evidence="1">
        <text>L-citrulline + L-aspartate + ATP = 2-(N(omega)-L-arginino)succinate + AMP + diphosphate + H(+)</text>
        <dbReference type="Rhea" id="RHEA:10932"/>
        <dbReference type="ChEBI" id="CHEBI:15378"/>
        <dbReference type="ChEBI" id="CHEBI:29991"/>
        <dbReference type="ChEBI" id="CHEBI:30616"/>
        <dbReference type="ChEBI" id="CHEBI:33019"/>
        <dbReference type="ChEBI" id="CHEBI:57472"/>
        <dbReference type="ChEBI" id="CHEBI:57743"/>
        <dbReference type="ChEBI" id="CHEBI:456215"/>
        <dbReference type="EC" id="6.3.4.5"/>
    </reaction>
</comment>
<comment type="pathway">
    <text evidence="1">Amino-acid biosynthesis; L-arginine biosynthesis; L-arginine from L-ornithine and carbamoyl phosphate: step 2/3.</text>
</comment>
<comment type="subunit">
    <text evidence="1">Homotetramer.</text>
</comment>
<comment type="subcellular location">
    <subcellularLocation>
        <location evidence="1">Cytoplasm</location>
    </subcellularLocation>
</comment>
<comment type="similarity">
    <text evidence="1">Belongs to the argininosuccinate synthase family. Type 2 subfamily.</text>
</comment>